<sequence>MKLLLLLIVSASMLIESLVNADGYIRKRDGCKLSCLFGNEGCNKECKSYGGSYGYCWTWGLACWCEGLPDDKTWKSETNTCG</sequence>
<dbReference type="EMBL" id="AF474983">
    <property type="protein sequence ID" value="AAM74027.1"/>
    <property type="molecule type" value="mRNA"/>
</dbReference>
<dbReference type="EMBL" id="AF474984">
    <property type="protein sequence ID" value="AAM74028.1"/>
    <property type="molecule type" value="mRNA"/>
</dbReference>
<dbReference type="EMBL" id="AF474985">
    <property type="protein sequence ID" value="AAM74029.1"/>
    <property type="molecule type" value="mRNA"/>
</dbReference>
<dbReference type="PIR" id="B34123">
    <property type="entry name" value="B34123"/>
</dbReference>
<dbReference type="SMR" id="P19855"/>
<dbReference type="TCDB" id="8.B.1.1.4">
    <property type="family name" value="the long (4c-c) scorpion toxin (l-st) superfamily"/>
</dbReference>
<dbReference type="GO" id="GO:0005576">
    <property type="term" value="C:extracellular region"/>
    <property type="evidence" value="ECO:0007669"/>
    <property type="project" value="UniProtKB-SubCell"/>
</dbReference>
<dbReference type="GO" id="GO:0019871">
    <property type="term" value="F:sodium channel inhibitor activity"/>
    <property type="evidence" value="ECO:0007669"/>
    <property type="project" value="InterPro"/>
</dbReference>
<dbReference type="GO" id="GO:0090729">
    <property type="term" value="F:toxin activity"/>
    <property type="evidence" value="ECO:0007669"/>
    <property type="project" value="UniProtKB-KW"/>
</dbReference>
<dbReference type="GO" id="GO:0006952">
    <property type="term" value="P:defense response"/>
    <property type="evidence" value="ECO:0007669"/>
    <property type="project" value="InterPro"/>
</dbReference>
<dbReference type="CDD" id="cd23106">
    <property type="entry name" value="neurotoxins_LC_scorpion"/>
    <property type="match status" value="1"/>
</dbReference>
<dbReference type="FunFam" id="3.30.30.10:FF:000002">
    <property type="entry name" value="Alpha-like toxin BmK-M1"/>
    <property type="match status" value="1"/>
</dbReference>
<dbReference type="Gene3D" id="3.30.30.10">
    <property type="entry name" value="Knottin, scorpion toxin-like"/>
    <property type="match status" value="1"/>
</dbReference>
<dbReference type="InterPro" id="IPR044062">
    <property type="entry name" value="LCN-type_CS_alpha_beta_dom"/>
</dbReference>
<dbReference type="InterPro" id="IPR003614">
    <property type="entry name" value="Scorpion_toxin-like"/>
</dbReference>
<dbReference type="InterPro" id="IPR036574">
    <property type="entry name" value="Scorpion_toxin-like_sf"/>
</dbReference>
<dbReference type="InterPro" id="IPR018218">
    <property type="entry name" value="Scorpion_toxinL"/>
</dbReference>
<dbReference type="InterPro" id="IPR002061">
    <property type="entry name" value="Scorpion_toxinL/defensin"/>
</dbReference>
<dbReference type="Pfam" id="PF00537">
    <property type="entry name" value="Toxin_3"/>
    <property type="match status" value="1"/>
</dbReference>
<dbReference type="PRINTS" id="PR00285">
    <property type="entry name" value="SCORPNTOXIN"/>
</dbReference>
<dbReference type="SMART" id="SM00505">
    <property type="entry name" value="Knot1"/>
    <property type="match status" value="1"/>
</dbReference>
<dbReference type="SUPFAM" id="SSF57095">
    <property type="entry name" value="Scorpion toxin-like"/>
    <property type="match status" value="1"/>
</dbReference>
<dbReference type="PROSITE" id="PS51863">
    <property type="entry name" value="LCN_CSAB"/>
    <property type="match status" value="1"/>
</dbReference>
<accession>P19855</accession>
<accession>Q8MVS6</accession>
<accession>Q8MVS7</accession>
<accession>Q8MVS8</accession>
<feature type="signal peptide" evidence="4 6 7">
    <location>
        <begin position="1"/>
        <end position="21"/>
    </location>
</feature>
<feature type="chain" id="PRO_0000035196" description="Beta-insect depressant toxin LqqIT2" evidence="4 6 7">
    <location>
        <begin position="22"/>
        <end position="82"/>
    </location>
</feature>
<feature type="domain" description="LCN-type CS-alpha/beta" evidence="2">
    <location>
        <begin position="22"/>
        <end position="82"/>
    </location>
</feature>
<feature type="disulfide bond" evidence="2">
    <location>
        <begin position="31"/>
        <end position="81"/>
    </location>
</feature>
<feature type="disulfide bond" evidence="1 2">
    <location>
        <begin position="35"/>
        <end position="56"/>
    </location>
</feature>
<feature type="disulfide bond" evidence="1 2">
    <location>
        <begin position="42"/>
        <end position="63"/>
    </location>
</feature>
<feature type="disulfide bond" evidence="1 2">
    <location>
        <begin position="46"/>
        <end position="65"/>
    </location>
</feature>
<feature type="sequence variant">
    <original>L</original>
    <variation>V</variation>
    <location>
        <position position="33"/>
    </location>
</feature>
<feature type="sequence variant">
    <original>N</original>
    <variation>D</variation>
    <location>
        <position position="43"/>
    </location>
</feature>
<feature type="sequence variant">
    <original>S</original>
    <variation>A</variation>
    <location>
        <position position="48"/>
    </location>
</feature>
<feature type="sequence variant">
    <original>D</original>
    <variation>E</variation>
    <location>
        <position position="71"/>
    </location>
</feature>
<evidence type="ECO:0000250" key="1">
    <source>
        <dbReference type="UniProtKB" id="P56637"/>
    </source>
</evidence>
<evidence type="ECO:0000255" key="2">
    <source>
        <dbReference type="PROSITE-ProRule" id="PRU01210"/>
    </source>
</evidence>
<evidence type="ECO:0000269" key="3">
    <source>
    </source>
</evidence>
<evidence type="ECO:0000269" key="4">
    <source>
    </source>
</evidence>
<evidence type="ECO:0000269" key="5">
    <source>
    </source>
</evidence>
<evidence type="ECO:0000269" key="6">
    <source>
    </source>
</evidence>
<evidence type="ECO:0000269" key="7">
    <source>
    </source>
</evidence>
<evidence type="ECO:0000269" key="8">
    <source ref="5"/>
</evidence>
<evidence type="ECO:0000303" key="9">
    <source>
    </source>
</evidence>
<evidence type="ECO:0000305" key="10"/>
<evidence type="ECO:0000305" key="11">
    <source>
    </source>
</evidence>
<keyword id="KW-0903">Direct protein sequencing</keyword>
<keyword id="KW-1015">Disulfide bond</keyword>
<keyword id="KW-0872">Ion channel impairing toxin</keyword>
<keyword id="KW-0528">Neurotoxin</keyword>
<keyword id="KW-0964">Secreted</keyword>
<keyword id="KW-0732">Signal</keyword>
<keyword id="KW-0800">Toxin</keyword>
<keyword id="KW-0738">Voltage-gated sodium channel impairing toxin</keyword>
<reference key="1">
    <citation type="journal article" date="2003" name="Toxicon">
        <title>Three polymorphic genes encoding a depressant toxin from the Egyptian scorpion Leiurus quinquestriatus quinquestriatus.</title>
        <authorList>
            <person name="Zaki T.I."/>
            <person name="Maruniak J.E."/>
        </authorList>
    </citation>
    <scope>NUCLEOTIDE SEQUENCE [MRNA]</scope>
</reference>
<reference key="2">
    <citation type="journal article" date="1990" name="FEBS Lett.">
        <title>Primary structure of scorpion anti-insect toxins isolated from the venom of Leiurus quinquestriatus quinquestriatus.</title>
        <authorList>
            <person name="Kopeyan C."/>
            <person name="Mansuelle P."/>
            <person name="Sampieri F."/>
            <person name="Brando T."/>
            <person name="Bahraoui E.M."/>
            <person name="Rochat H."/>
            <person name="Granier C."/>
        </authorList>
    </citation>
    <scope>PROTEIN SEQUENCE OF 22-82</scope>
    <scope>SUBCELLULAR LOCATION</scope>
    <source>
        <tissue>Venom</tissue>
    </source>
</reference>
<reference key="3">
    <citation type="journal article" date="1991" name="Biochemistry">
        <title>Functional duality and structural uniqueness of depressant insect-selective neurotoxins.</title>
        <authorList>
            <person name="Zlotkin E."/>
            <person name="Eitan M."/>
            <person name="Bindokas V.P."/>
            <person name="Adams M.E."/>
            <person name="Moyer M."/>
            <person name="Burkhart W."/>
            <person name="Fowler E."/>
        </authorList>
    </citation>
    <scope>PROTEIN SEQUENCE OF 22-82</scope>
    <scope>SUBCELLULAR LOCATION</scope>
    <source>
        <tissue>Venom</tissue>
    </source>
</reference>
<reference key="4">
    <citation type="journal article" date="1993" name="Arch. Insect Biochem. Physiol.">
        <title>Depressant insect selective neurotoxins from scorpion venom: chemistry, action, and gene cloning.</title>
        <authorList>
            <person name="Zlotkin E."/>
            <person name="Gurevitz M."/>
            <person name="Fowler E."/>
            <person name="Adams M.E."/>
        </authorList>
    </citation>
    <scope>PROTEIN SEQUENCE OF 22-82</scope>
    <scope>SUBCELLULAR LOCATION</scope>
    <source>
        <tissue>Venom</tissue>
    </source>
</reference>
<reference key="5">
    <citation type="journal article" date="1990" name="Toxicon">
        <title>On the chemistry and action of the depressant insect toxins.</title>
        <authorList>
            <person name="Zlotkin E."/>
            <person name="Fowler E."/>
            <person name="Eitan M."/>
            <person name="Moyer M."/>
            <person name="Adams M.E."/>
        </authorList>
    </citation>
    <scope>FUNCTION</scope>
</reference>
<reference key="6">
    <citation type="journal article" date="2005" name="Toxicon">
        <title>The depressant scorpion neurotoxin LqqIT2 selectively modulates the insect voltage-gated sodium channel.</title>
        <authorList>
            <person name="Bosmans F."/>
            <person name="Martin-Eauclaire M.-F."/>
            <person name="Tytgat J."/>
        </authorList>
    </citation>
    <scope>FUNCTION</scope>
    <source>
        <tissue>Venom</tissue>
    </source>
</reference>
<reference key="7">
    <citation type="journal article" date="2010" name="Neurosci. Lett.">
        <title>Involvement of endogenous opioid system in scorpion toxin-induced antinociception in mice.</title>
        <authorList>
            <person name="Martin-Eauclaire M.F."/>
            <person name="Abbas N."/>
            <person name="Sauze N."/>
            <person name="Mercier L."/>
            <person name="Berge-Lefranc J.L."/>
            <person name="Condo J."/>
            <person name="Bougis P.E."/>
            <person name="Guieu R."/>
        </authorList>
    </citation>
    <scope>FUNCTION</scope>
</reference>
<proteinExistence type="evidence at protein level"/>
<protein>
    <recommendedName>
        <fullName evidence="9">Beta-insect depressant toxin LqqIT2</fullName>
        <shortName>Insect toxin 2</shortName>
    </recommendedName>
</protein>
<organism>
    <name type="scientific">Leiurus quinquestriatus quinquestriatus</name>
    <name type="common">Egyptian scorpion</name>
    <name type="synonym">Deathstalker scorpion</name>
    <dbReference type="NCBI Taxonomy" id="6885"/>
    <lineage>
        <taxon>Eukaryota</taxon>
        <taxon>Metazoa</taxon>
        <taxon>Ecdysozoa</taxon>
        <taxon>Arthropoda</taxon>
        <taxon>Chelicerata</taxon>
        <taxon>Arachnida</taxon>
        <taxon>Scorpiones</taxon>
        <taxon>Buthida</taxon>
        <taxon>Buthoidea</taxon>
        <taxon>Buthidae</taxon>
        <taxon>Leiurus</taxon>
    </lineage>
</organism>
<comment type="function">
    <text evidence="3 5 8">Depressant insect beta-toxins cause a transient contraction paralysis followed by a slow flaccid paralysis. They bind voltage-independently at site-4 of sodium channels and shift the voltage of activation toward more negative potentials thereby affecting sodium channel activation and promoting spontaneous and repetitive firing. Aside from typical beta-toxin effects, this toxin also affects the inactivation process and ion selectivity of the insect voltage-gated sodium channel. This toxin is active only on insects (PubMed:15733572). Is active on the insect voltage-gated sodium channel para (PubMed:15733572). In vivo, when injected intraperitoneally, it exhibits analgesic activity, increasing hot plate and tail flick withdrawal latencies in a dose-dependent fashion (PubMed:20619318). This phenomenon might be partly due to an inhibitory mechanism activated by noxious stimuli (PubMed:20619318).</text>
</comment>
<comment type="subcellular location">
    <subcellularLocation>
        <location evidence="4 6 7">Secreted</location>
    </subcellularLocation>
</comment>
<comment type="tissue specificity">
    <text evidence="11">Expressed by the venom gland.</text>
</comment>
<comment type="domain">
    <text evidence="10">Has the structural arrangement of an alpha-helix connected to antiparallel beta-sheets by disulfide bonds (CS-alpha/beta).</text>
</comment>
<comment type="miscellaneous">
    <text evidence="3">Negative results: does not affect the rat brain Nav1.2/SCN2A sodium channel.</text>
</comment>
<comment type="similarity">
    <text evidence="10">Belongs to the long (4 C-C) scorpion toxin superfamily. Sodium channel inhibitor family. Beta subfamily.</text>
</comment>
<name>SIX2_LEIQU</name>